<sequence length="591" mass="66062">MPTVGIKKVILDKHFKRVYSEKEFDELCFEYGLELDEITSEKAAVEKEQGTRAASDLNDQEVYKIDIPANRYDLLSVEGLARAIRIFKQEIPSPAYKYADVPKTGLQKIIVKKETAQVRPFVVGAVLRDISFDADSYASFIDLQDKLHQNICRKRTLVAIGTHDLDTIQGPFEYRAEAPKDIKFKPLNQTKEYTAEELMTLYSTDSHLKAYLPIIQNHPVYPVIYDKNGVVCSMPPIINGEHSKITLNTKNVFIEATATDKQKAFVVLDTIVTLFSQYCAKPFTIEQVEVVYEETGVKELYPLLSYREMTVTTPEINTKIGINLKDEEMATLLNKMSLKAEVAAKETLKIVVPPTRHDILHACDIAEDVGVAFGYNNLITKLPESNTVAVAFPINKLCDNLRIEIAAAGWTEALNFALCSRDDISSKLRQPDALSHAVHIGNPKTLEFQVARTSLLPGLLKTLSSNRDMPLPLKLFELQDVIVKDSNTDVGARNERRLAAVYYNRAAGFEIIQGFLDRIMRMLNVNPARDGTGYYIEADENSTYFPGRCAKIIGPKGVVLGHIGALHPEVITSFGLTLPCGAVEINVEPFL</sequence>
<accession>Q19713</accession>
<dbReference type="EC" id="6.1.1.20"/>
<dbReference type="EMBL" id="Z50044">
    <property type="protein sequence ID" value="CAA90360.1"/>
    <property type="molecule type" value="Genomic_DNA"/>
</dbReference>
<dbReference type="PIR" id="T21245">
    <property type="entry name" value="T21245"/>
</dbReference>
<dbReference type="RefSeq" id="NP_495785.1">
    <property type="nucleotide sequence ID" value="NM_063384.7"/>
</dbReference>
<dbReference type="SMR" id="Q19713"/>
<dbReference type="BioGRID" id="39680">
    <property type="interactions" value="8"/>
</dbReference>
<dbReference type="FunCoup" id="Q19713">
    <property type="interactions" value="2608"/>
</dbReference>
<dbReference type="IntAct" id="Q19713">
    <property type="interactions" value="4"/>
</dbReference>
<dbReference type="STRING" id="6239.F22B5.9.1"/>
<dbReference type="PaxDb" id="6239-F22B5.9"/>
<dbReference type="PeptideAtlas" id="Q19713"/>
<dbReference type="EnsemblMetazoa" id="F22B5.9.1">
    <property type="protein sequence ID" value="F22B5.9.1"/>
    <property type="gene ID" value="WBGene00001498"/>
</dbReference>
<dbReference type="GeneID" id="174351"/>
<dbReference type="KEGG" id="cel:CELE_F22B5.9"/>
<dbReference type="UCSC" id="F22B5.9">
    <property type="organism name" value="c. elegans"/>
</dbReference>
<dbReference type="AGR" id="WB:WBGene00001498"/>
<dbReference type="CTD" id="174351"/>
<dbReference type="WormBase" id="F22B5.9">
    <property type="protein sequence ID" value="CE20708"/>
    <property type="gene ID" value="WBGene00001498"/>
    <property type="gene designation" value="fars-3"/>
</dbReference>
<dbReference type="eggNOG" id="KOG2472">
    <property type="taxonomic scope" value="Eukaryota"/>
</dbReference>
<dbReference type="GeneTree" id="ENSGT00530000063489"/>
<dbReference type="HOGENOM" id="CLU_020279_2_0_1"/>
<dbReference type="InParanoid" id="Q19713"/>
<dbReference type="OMA" id="FPGRCAN"/>
<dbReference type="OrthoDB" id="1698572at2759"/>
<dbReference type="PhylomeDB" id="Q19713"/>
<dbReference type="PRO" id="PR:Q19713"/>
<dbReference type="Proteomes" id="UP000001940">
    <property type="component" value="Chromosome II"/>
</dbReference>
<dbReference type="Bgee" id="WBGene00001498">
    <property type="expression patterns" value="Expressed in germ line (C elegans) and 4 other cell types or tissues"/>
</dbReference>
<dbReference type="GO" id="GO:0009328">
    <property type="term" value="C:phenylalanine-tRNA ligase complex"/>
    <property type="evidence" value="ECO:0000318"/>
    <property type="project" value="GO_Central"/>
</dbReference>
<dbReference type="GO" id="GO:0005524">
    <property type="term" value="F:ATP binding"/>
    <property type="evidence" value="ECO:0007669"/>
    <property type="project" value="UniProtKB-KW"/>
</dbReference>
<dbReference type="GO" id="GO:0000287">
    <property type="term" value="F:magnesium ion binding"/>
    <property type="evidence" value="ECO:0000250"/>
    <property type="project" value="UniProtKB"/>
</dbReference>
<dbReference type="GO" id="GO:0004826">
    <property type="term" value="F:phenylalanine-tRNA ligase activity"/>
    <property type="evidence" value="ECO:0007669"/>
    <property type="project" value="UniProtKB-EC"/>
</dbReference>
<dbReference type="GO" id="GO:0003723">
    <property type="term" value="F:RNA binding"/>
    <property type="evidence" value="ECO:0007669"/>
    <property type="project" value="InterPro"/>
</dbReference>
<dbReference type="GO" id="GO:0006432">
    <property type="term" value="P:phenylalanyl-tRNA aminoacylation"/>
    <property type="evidence" value="ECO:0000318"/>
    <property type="project" value="GO_Central"/>
</dbReference>
<dbReference type="CDD" id="cd00769">
    <property type="entry name" value="PheRS_beta_core"/>
    <property type="match status" value="1"/>
</dbReference>
<dbReference type="FunFam" id="3.30.930.10:FF:000032">
    <property type="entry name" value="Phenylalanine--tRNA ligase beta subunit"/>
    <property type="match status" value="1"/>
</dbReference>
<dbReference type="FunFam" id="3.50.40.10:FF:000002">
    <property type="entry name" value="phenylalanine--tRNA ligase beta subunit"/>
    <property type="match status" value="1"/>
</dbReference>
<dbReference type="FunFam" id="3.30.56.10:FF:000008">
    <property type="entry name" value="Phenylalanyl-tRNA synthetase subunit beta"/>
    <property type="match status" value="1"/>
</dbReference>
<dbReference type="FunFam" id="3.30.56.10:FF:000004">
    <property type="entry name" value="Phenylalanyl-tRNA synthetase, beta subunit"/>
    <property type="match status" value="1"/>
</dbReference>
<dbReference type="Gene3D" id="3.30.56.10">
    <property type="match status" value="2"/>
</dbReference>
<dbReference type="Gene3D" id="3.30.930.10">
    <property type="entry name" value="Bira Bifunctional Protein, Domain 2"/>
    <property type="match status" value="1"/>
</dbReference>
<dbReference type="Gene3D" id="3.50.40.10">
    <property type="entry name" value="Phenylalanyl-trna Synthetase, Chain B, domain 3"/>
    <property type="match status" value="1"/>
</dbReference>
<dbReference type="InterPro" id="IPR045864">
    <property type="entry name" value="aa-tRNA-synth_II/BPL/LPL"/>
</dbReference>
<dbReference type="InterPro" id="IPR005146">
    <property type="entry name" value="B3/B4_tRNA-bd"/>
</dbReference>
<dbReference type="InterPro" id="IPR009061">
    <property type="entry name" value="DNA-bd_dom_put_sf"/>
</dbReference>
<dbReference type="InterPro" id="IPR045060">
    <property type="entry name" value="Phe-tRNA-ligase_IIc_bsu"/>
</dbReference>
<dbReference type="InterPro" id="IPR004531">
    <property type="entry name" value="Phe-tRNA-synth_IIc_bsu_arc_euk"/>
</dbReference>
<dbReference type="InterPro" id="IPR020825">
    <property type="entry name" value="Phe-tRNA_synthase-like_B3/B4"/>
</dbReference>
<dbReference type="InterPro" id="IPR041616">
    <property type="entry name" value="PheRS_beta_core"/>
</dbReference>
<dbReference type="InterPro" id="IPR040659">
    <property type="entry name" value="PhetRS_B1"/>
</dbReference>
<dbReference type="InterPro" id="IPR005147">
    <property type="entry name" value="tRNA_synthase_B5-dom"/>
</dbReference>
<dbReference type="NCBIfam" id="TIGR00471">
    <property type="entry name" value="pheT_arch"/>
    <property type="match status" value="1"/>
</dbReference>
<dbReference type="PANTHER" id="PTHR10947:SF0">
    <property type="entry name" value="PHENYLALANINE--TRNA LIGASE BETA SUBUNIT"/>
    <property type="match status" value="1"/>
</dbReference>
<dbReference type="PANTHER" id="PTHR10947">
    <property type="entry name" value="PHENYLALANYL-TRNA SYNTHETASE BETA CHAIN AND LEUCINE-RICH REPEAT-CONTAINING PROTEIN 47"/>
    <property type="match status" value="1"/>
</dbReference>
<dbReference type="Pfam" id="PF03483">
    <property type="entry name" value="B3_4"/>
    <property type="match status" value="1"/>
</dbReference>
<dbReference type="Pfam" id="PF03484">
    <property type="entry name" value="B5"/>
    <property type="match status" value="1"/>
</dbReference>
<dbReference type="Pfam" id="PF18262">
    <property type="entry name" value="PhetRS_B1"/>
    <property type="match status" value="1"/>
</dbReference>
<dbReference type="Pfam" id="PF17759">
    <property type="entry name" value="tRNA_synthFbeta"/>
    <property type="match status" value="1"/>
</dbReference>
<dbReference type="SMART" id="SM00873">
    <property type="entry name" value="B3_4"/>
    <property type="match status" value="1"/>
</dbReference>
<dbReference type="SMART" id="SM00874">
    <property type="entry name" value="B5"/>
    <property type="match status" value="1"/>
</dbReference>
<dbReference type="SUPFAM" id="SSF55681">
    <property type="entry name" value="Class II aaRS and biotin synthetases"/>
    <property type="match status" value="1"/>
</dbReference>
<dbReference type="SUPFAM" id="SSF56037">
    <property type="entry name" value="PheT/TilS domain"/>
    <property type="match status" value="1"/>
</dbReference>
<dbReference type="SUPFAM" id="SSF46955">
    <property type="entry name" value="Putative DNA-binding domain"/>
    <property type="match status" value="2"/>
</dbReference>
<dbReference type="PROSITE" id="PS51483">
    <property type="entry name" value="B5"/>
    <property type="match status" value="1"/>
</dbReference>
<feature type="chain" id="PRO_0000127018" description="Phenylalanine--tRNA ligase beta subunit">
    <location>
        <begin position="1"/>
        <end position="591"/>
    </location>
</feature>
<feature type="domain" description="B5" evidence="3">
    <location>
        <begin position="304"/>
        <end position="380"/>
    </location>
</feature>
<feature type="binding site" evidence="3">
    <location>
        <position position="358"/>
    </location>
    <ligand>
        <name>Mg(2+)</name>
        <dbReference type="ChEBI" id="CHEBI:18420"/>
        <note>shared with alpha subunit</note>
    </ligand>
</feature>
<feature type="binding site" evidence="3">
    <location>
        <position position="364"/>
    </location>
    <ligand>
        <name>Mg(2+)</name>
        <dbReference type="ChEBI" id="CHEBI:18420"/>
        <note>shared with alpha subunit</note>
    </ligand>
</feature>
<feature type="binding site" evidence="3">
    <location>
        <position position="367"/>
    </location>
    <ligand>
        <name>Mg(2+)</name>
        <dbReference type="ChEBI" id="CHEBI:18420"/>
        <note>shared with alpha subunit</note>
    </ligand>
</feature>
<feature type="binding site" evidence="3">
    <location>
        <position position="368"/>
    </location>
    <ligand>
        <name>Mg(2+)</name>
        <dbReference type="ChEBI" id="CHEBI:18420"/>
        <note>shared with alpha subunit</note>
    </ligand>
</feature>
<comment type="catalytic activity">
    <reaction>
        <text>tRNA(Phe) + L-phenylalanine + ATP = L-phenylalanyl-tRNA(Phe) + AMP + diphosphate + H(+)</text>
        <dbReference type="Rhea" id="RHEA:19413"/>
        <dbReference type="Rhea" id="RHEA-COMP:9668"/>
        <dbReference type="Rhea" id="RHEA-COMP:9699"/>
        <dbReference type="ChEBI" id="CHEBI:15378"/>
        <dbReference type="ChEBI" id="CHEBI:30616"/>
        <dbReference type="ChEBI" id="CHEBI:33019"/>
        <dbReference type="ChEBI" id="CHEBI:58095"/>
        <dbReference type="ChEBI" id="CHEBI:78442"/>
        <dbReference type="ChEBI" id="CHEBI:78531"/>
        <dbReference type="ChEBI" id="CHEBI:456215"/>
        <dbReference type="EC" id="6.1.1.20"/>
    </reaction>
</comment>
<comment type="cofactor">
    <cofactor evidence="2">
        <name>Mg(2+)</name>
        <dbReference type="ChEBI" id="CHEBI:18420"/>
    </cofactor>
</comment>
<comment type="subunit">
    <text evidence="1">Tetramer of two alpha and two beta subunits.</text>
</comment>
<comment type="subcellular location">
    <subcellularLocation>
        <location evidence="1">Cytoplasm</location>
    </subcellularLocation>
</comment>
<comment type="similarity">
    <text evidence="4">Belongs to the phenylalanyl-tRNA synthetase beta subunit family. Type 2 subfamily.</text>
</comment>
<gene>
    <name evidence="5" type="primary">fars-3</name>
    <name evidence="5" type="synonym">frs-2</name>
    <name evidence="5" type="ORF">F22B5.9</name>
</gene>
<name>SYFB_CAEEL</name>
<evidence type="ECO:0000250" key="1"/>
<evidence type="ECO:0000250" key="2">
    <source>
        <dbReference type="UniProtKB" id="A5K464"/>
    </source>
</evidence>
<evidence type="ECO:0000255" key="3">
    <source>
        <dbReference type="PROSITE-ProRule" id="PRU00816"/>
    </source>
</evidence>
<evidence type="ECO:0000305" key="4"/>
<evidence type="ECO:0000312" key="5">
    <source>
        <dbReference type="WormBase" id="F22B5.9"/>
    </source>
</evidence>
<organism>
    <name type="scientific">Caenorhabditis elegans</name>
    <dbReference type="NCBI Taxonomy" id="6239"/>
    <lineage>
        <taxon>Eukaryota</taxon>
        <taxon>Metazoa</taxon>
        <taxon>Ecdysozoa</taxon>
        <taxon>Nematoda</taxon>
        <taxon>Chromadorea</taxon>
        <taxon>Rhabditida</taxon>
        <taxon>Rhabditina</taxon>
        <taxon>Rhabditomorpha</taxon>
        <taxon>Rhabditoidea</taxon>
        <taxon>Rhabditidae</taxon>
        <taxon>Peloderinae</taxon>
        <taxon>Caenorhabditis</taxon>
    </lineage>
</organism>
<reference key="1">
    <citation type="journal article" date="1998" name="Science">
        <title>Genome sequence of the nematode C. elegans: a platform for investigating biology.</title>
        <authorList>
            <consortium name="The C. elegans sequencing consortium"/>
        </authorList>
    </citation>
    <scope>NUCLEOTIDE SEQUENCE [LARGE SCALE GENOMIC DNA]</scope>
    <source>
        <strain>Bristol N2</strain>
    </source>
</reference>
<keyword id="KW-0030">Aminoacyl-tRNA synthetase</keyword>
<keyword id="KW-0067">ATP-binding</keyword>
<keyword id="KW-0963">Cytoplasm</keyword>
<keyword id="KW-0436">Ligase</keyword>
<keyword id="KW-0460">Magnesium</keyword>
<keyword id="KW-0479">Metal-binding</keyword>
<keyword id="KW-0547">Nucleotide-binding</keyword>
<keyword id="KW-0648">Protein biosynthesis</keyword>
<keyword id="KW-1185">Reference proteome</keyword>
<protein>
    <recommendedName>
        <fullName>Phenylalanine--tRNA ligase beta subunit</fullName>
        <ecNumber>6.1.1.20</ecNumber>
    </recommendedName>
    <alternativeName>
        <fullName>Phenylalanyl-tRNA synthetase beta subunit</fullName>
        <shortName>PheRS</shortName>
    </alternativeName>
</protein>
<proteinExistence type="inferred from homology"/>